<gene>
    <name evidence="1" type="primary">dapB</name>
    <name type="ordered locus">PMT_0814</name>
</gene>
<accession>Q7V7D4</accession>
<evidence type="ECO:0000255" key="1">
    <source>
        <dbReference type="HAMAP-Rule" id="MF_00102"/>
    </source>
</evidence>
<evidence type="ECO:0000305" key="2"/>
<keyword id="KW-0028">Amino-acid biosynthesis</keyword>
<keyword id="KW-0963">Cytoplasm</keyword>
<keyword id="KW-0220">Diaminopimelate biosynthesis</keyword>
<keyword id="KW-0457">Lysine biosynthesis</keyword>
<keyword id="KW-0520">NAD</keyword>
<keyword id="KW-0521">NADP</keyword>
<keyword id="KW-0560">Oxidoreductase</keyword>
<keyword id="KW-1185">Reference proteome</keyword>
<comment type="function">
    <text evidence="1">Catalyzes the conversion of 4-hydroxy-tetrahydrodipicolinate (HTPA) to tetrahydrodipicolinate.</text>
</comment>
<comment type="catalytic activity">
    <reaction evidence="1">
        <text>(S)-2,3,4,5-tetrahydrodipicolinate + NAD(+) + H2O = (2S,4S)-4-hydroxy-2,3,4,5-tetrahydrodipicolinate + NADH + H(+)</text>
        <dbReference type="Rhea" id="RHEA:35323"/>
        <dbReference type="ChEBI" id="CHEBI:15377"/>
        <dbReference type="ChEBI" id="CHEBI:15378"/>
        <dbReference type="ChEBI" id="CHEBI:16845"/>
        <dbReference type="ChEBI" id="CHEBI:57540"/>
        <dbReference type="ChEBI" id="CHEBI:57945"/>
        <dbReference type="ChEBI" id="CHEBI:67139"/>
        <dbReference type="EC" id="1.17.1.8"/>
    </reaction>
</comment>
<comment type="catalytic activity">
    <reaction evidence="1">
        <text>(S)-2,3,4,5-tetrahydrodipicolinate + NADP(+) + H2O = (2S,4S)-4-hydroxy-2,3,4,5-tetrahydrodipicolinate + NADPH + H(+)</text>
        <dbReference type="Rhea" id="RHEA:35331"/>
        <dbReference type="ChEBI" id="CHEBI:15377"/>
        <dbReference type="ChEBI" id="CHEBI:15378"/>
        <dbReference type="ChEBI" id="CHEBI:16845"/>
        <dbReference type="ChEBI" id="CHEBI:57783"/>
        <dbReference type="ChEBI" id="CHEBI:58349"/>
        <dbReference type="ChEBI" id="CHEBI:67139"/>
        <dbReference type="EC" id="1.17.1.8"/>
    </reaction>
</comment>
<comment type="pathway">
    <text evidence="1">Amino-acid biosynthesis; L-lysine biosynthesis via DAP pathway; (S)-tetrahydrodipicolinate from L-aspartate: step 4/4.</text>
</comment>
<comment type="subcellular location">
    <subcellularLocation>
        <location evidence="1">Cytoplasm</location>
    </subcellularLocation>
</comment>
<comment type="similarity">
    <text evidence="1">Belongs to the DapB family.</text>
</comment>
<comment type="caution">
    <text evidence="2">Was originally thought to be a dihydrodipicolinate reductase (DHDPR), catalyzing the conversion of dihydrodipicolinate to tetrahydrodipicolinate. However, it was shown in E.coli that the substrate of the enzymatic reaction is not dihydrodipicolinate (DHDP) but in fact (2S,4S)-4-hydroxy-2,3,4,5-tetrahydrodipicolinic acid (HTPA), the product released by the DapA-catalyzed reaction.</text>
</comment>
<name>DAPB_PROMM</name>
<feature type="chain" id="PRO_0000141466" description="4-hydroxy-tetrahydrodipicolinate reductase">
    <location>
        <begin position="1"/>
        <end position="283"/>
    </location>
</feature>
<feature type="active site" description="Proton donor/acceptor" evidence="1">
    <location>
        <position position="172"/>
    </location>
</feature>
<feature type="active site" description="Proton donor" evidence="1">
    <location>
        <position position="176"/>
    </location>
</feature>
<feature type="binding site" evidence="1">
    <location>
        <begin position="15"/>
        <end position="20"/>
    </location>
    <ligand>
        <name>NAD(+)</name>
        <dbReference type="ChEBI" id="CHEBI:57540"/>
    </ligand>
</feature>
<feature type="binding site" evidence="1">
    <location>
        <begin position="116"/>
        <end position="118"/>
    </location>
    <ligand>
        <name>NAD(+)</name>
        <dbReference type="ChEBI" id="CHEBI:57540"/>
    </ligand>
</feature>
<feature type="binding site" evidence="1">
    <location>
        <position position="173"/>
    </location>
    <ligand>
        <name>(S)-2,3,4,5-tetrahydrodipicolinate</name>
        <dbReference type="ChEBI" id="CHEBI:16845"/>
    </ligand>
</feature>
<feature type="binding site" evidence="1">
    <location>
        <begin position="182"/>
        <end position="183"/>
    </location>
    <ligand>
        <name>(S)-2,3,4,5-tetrahydrodipicolinate</name>
        <dbReference type="ChEBI" id="CHEBI:16845"/>
    </ligand>
</feature>
<sequence>MTSVPPELIPVVVVGALGRMGAEVIKAVHLASDCELVGAVDTTPGKEGVEIGEELGIGVLDVALTSDIEACLCSVSQSFHRTGPGQGAVLVDFTHPSVVYEHTRAAFAYGVHPVIGTTGLSHQQLVDLSEFAAKASMGGAVIPNFSVGMVLLQQAAAAAARFYDNAELTELHHNRKADAPSGTCIKTAEMMEELGKSFNSPEVDEHESLTGSRGGLRASGLRLHSLRLPGLVAHQEVMFGAPGESYTLRHDTIDRSAYMPGVLLTVRKVRQLQGLVYGLERLI</sequence>
<reference key="1">
    <citation type="journal article" date="2003" name="Nature">
        <title>Genome divergence in two Prochlorococcus ecotypes reflects oceanic niche differentiation.</title>
        <authorList>
            <person name="Rocap G."/>
            <person name="Larimer F.W."/>
            <person name="Lamerdin J.E."/>
            <person name="Malfatti S."/>
            <person name="Chain P."/>
            <person name="Ahlgren N.A."/>
            <person name="Arellano A."/>
            <person name="Coleman M."/>
            <person name="Hauser L."/>
            <person name="Hess W.R."/>
            <person name="Johnson Z.I."/>
            <person name="Land M.L."/>
            <person name="Lindell D."/>
            <person name="Post A.F."/>
            <person name="Regala W."/>
            <person name="Shah M."/>
            <person name="Shaw S.L."/>
            <person name="Steglich C."/>
            <person name="Sullivan M.B."/>
            <person name="Ting C.S."/>
            <person name="Tolonen A."/>
            <person name="Webb E.A."/>
            <person name="Zinser E.R."/>
            <person name="Chisholm S.W."/>
        </authorList>
    </citation>
    <scope>NUCLEOTIDE SEQUENCE [LARGE SCALE GENOMIC DNA]</scope>
    <source>
        <strain>MIT 9313</strain>
    </source>
</reference>
<proteinExistence type="inferred from homology"/>
<protein>
    <recommendedName>
        <fullName evidence="1">4-hydroxy-tetrahydrodipicolinate reductase</fullName>
        <shortName evidence="1">HTPA reductase</shortName>
        <ecNumber evidence="1">1.17.1.8</ecNumber>
    </recommendedName>
</protein>
<organism>
    <name type="scientific">Prochlorococcus marinus (strain MIT 9313)</name>
    <dbReference type="NCBI Taxonomy" id="74547"/>
    <lineage>
        <taxon>Bacteria</taxon>
        <taxon>Bacillati</taxon>
        <taxon>Cyanobacteriota</taxon>
        <taxon>Cyanophyceae</taxon>
        <taxon>Synechococcales</taxon>
        <taxon>Prochlorococcaceae</taxon>
        <taxon>Prochlorococcus</taxon>
    </lineage>
</organism>
<dbReference type="EC" id="1.17.1.8" evidence="1"/>
<dbReference type="EMBL" id="BX548175">
    <property type="protein sequence ID" value="CAE20989.1"/>
    <property type="molecule type" value="Genomic_DNA"/>
</dbReference>
<dbReference type="RefSeq" id="WP_011130192.1">
    <property type="nucleotide sequence ID" value="NC_005071.1"/>
</dbReference>
<dbReference type="SMR" id="Q7V7D4"/>
<dbReference type="KEGG" id="pmt:PMT_0814"/>
<dbReference type="eggNOG" id="COG0289">
    <property type="taxonomic scope" value="Bacteria"/>
</dbReference>
<dbReference type="HOGENOM" id="CLU_047479_0_0_3"/>
<dbReference type="OrthoDB" id="9790352at2"/>
<dbReference type="UniPathway" id="UPA00034">
    <property type="reaction ID" value="UER00018"/>
</dbReference>
<dbReference type="Proteomes" id="UP000001423">
    <property type="component" value="Chromosome"/>
</dbReference>
<dbReference type="GO" id="GO:0005829">
    <property type="term" value="C:cytosol"/>
    <property type="evidence" value="ECO:0007669"/>
    <property type="project" value="TreeGrafter"/>
</dbReference>
<dbReference type="GO" id="GO:0008839">
    <property type="term" value="F:4-hydroxy-tetrahydrodipicolinate reductase"/>
    <property type="evidence" value="ECO:0007669"/>
    <property type="project" value="UniProtKB-EC"/>
</dbReference>
<dbReference type="GO" id="GO:0051287">
    <property type="term" value="F:NAD binding"/>
    <property type="evidence" value="ECO:0007669"/>
    <property type="project" value="UniProtKB-UniRule"/>
</dbReference>
<dbReference type="GO" id="GO:0050661">
    <property type="term" value="F:NADP binding"/>
    <property type="evidence" value="ECO:0007669"/>
    <property type="project" value="UniProtKB-UniRule"/>
</dbReference>
<dbReference type="GO" id="GO:0016726">
    <property type="term" value="F:oxidoreductase activity, acting on CH or CH2 groups, NAD or NADP as acceptor"/>
    <property type="evidence" value="ECO:0007669"/>
    <property type="project" value="UniProtKB-UniRule"/>
</dbReference>
<dbReference type="GO" id="GO:0019877">
    <property type="term" value="P:diaminopimelate biosynthetic process"/>
    <property type="evidence" value="ECO:0007669"/>
    <property type="project" value="UniProtKB-UniRule"/>
</dbReference>
<dbReference type="GO" id="GO:0009089">
    <property type="term" value="P:lysine biosynthetic process via diaminopimelate"/>
    <property type="evidence" value="ECO:0007669"/>
    <property type="project" value="UniProtKB-UniRule"/>
</dbReference>
<dbReference type="CDD" id="cd02274">
    <property type="entry name" value="DHDPR_N"/>
    <property type="match status" value="1"/>
</dbReference>
<dbReference type="FunFam" id="3.30.360.10:FF:000009">
    <property type="entry name" value="4-hydroxy-tetrahydrodipicolinate reductase"/>
    <property type="match status" value="1"/>
</dbReference>
<dbReference type="Gene3D" id="3.30.360.10">
    <property type="entry name" value="Dihydrodipicolinate Reductase, domain 2"/>
    <property type="match status" value="1"/>
</dbReference>
<dbReference type="Gene3D" id="3.40.50.720">
    <property type="entry name" value="NAD(P)-binding Rossmann-like Domain"/>
    <property type="match status" value="1"/>
</dbReference>
<dbReference type="HAMAP" id="MF_00102">
    <property type="entry name" value="DapB"/>
    <property type="match status" value="1"/>
</dbReference>
<dbReference type="InterPro" id="IPR022663">
    <property type="entry name" value="DapB_C"/>
</dbReference>
<dbReference type="InterPro" id="IPR000846">
    <property type="entry name" value="DapB_N"/>
</dbReference>
<dbReference type="InterPro" id="IPR022664">
    <property type="entry name" value="DapB_N_CS"/>
</dbReference>
<dbReference type="InterPro" id="IPR023940">
    <property type="entry name" value="DHDPR_bac"/>
</dbReference>
<dbReference type="InterPro" id="IPR036291">
    <property type="entry name" value="NAD(P)-bd_dom_sf"/>
</dbReference>
<dbReference type="NCBIfam" id="TIGR00036">
    <property type="entry name" value="dapB"/>
    <property type="match status" value="1"/>
</dbReference>
<dbReference type="PANTHER" id="PTHR20836:SF0">
    <property type="entry name" value="4-HYDROXY-TETRAHYDRODIPICOLINATE REDUCTASE 1, CHLOROPLASTIC-RELATED"/>
    <property type="match status" value="1"/>
</dbReference>
<dbReference type="PANTHER" id="PTHR20836">
    <property type="entry name" value="DIHYDRODIPICOLINATE REDUCTASE"/>
    <property type="match status" value="1"/>
</dbReference>
<dbReference type="Pfam" id="PF05173">
    <property type="entry name" value="DapB_C"/>
    <property type="match status" value="1"/>
</dbReference>
<dbReference type="Pfam" id="PF01113">
    <property type="entry name" value="DapB_N"/>
    <property type="match status" value="1"/>
</dbReference>
<dbReference type="PIRSF" id="PIRSF000161">
    <property type="entry name" value="DHPR"/>
    <property type="match status" value="1"/>
</dbReference>
<dbReference type="SUPFAM" id="SSF55347">
    <property type="entry name" value="Glyceraldehyde-3-phosphate dehydrogenase-like, C-terminal domain"/>
    <property type="match status" value="1"/>
</dbReference>
<dbReference type="SUPFAM" id="SSF51735">
    <property type="entry name" value="NAD(P)-binding Rossmann-fold domains"/>
    <property type="match status" value="1"/>
</dbReference>
<dbReference type="PROSITE" id="PS01298">
    <property type="entry name" value="DAPB"/>
    <property type="match status" value="1"/>
</dbReference>